<keyword id="KW-0997">Cell inner membrane</keyword>
<keyword id="KW-1003">Cell membrane</keyword>
<keyword id="KW-0472">Membrane</keyword>
<keyword id="KW-0520">NAD</keyword>
<keyword id="KW-0874">Quinone</keyword>
<keyword id="KW-1278">Translocase</keyword>
<keyword id="KW-0812">Transmembrane</keyword>
<keyword id="KW-1133">Transmembrane helix</keyword>
<keyword id="KW-0830">Ubiquinone</keyword>
<accession>A9N586</accession>
<feature type="chain" id="PRO_1000086949" description="NADH-quinone oxidoreductase subunit H">
    <location>
        <begin position="1"/>
        <end position="325"/>
    </location>
</feature>
<feature type="transmembrane region" description="Helical" evidence="1">
    <location>
        <begin position="11"/>
        <end position="31"/>
    </location>
</feature>
<feature type="transmembrane region" description="Helical" evidence="1">
    <location>
        <begin position="50"/>
        <end position="69"/>
    </location>
</feature>
<feature type="transmembrane region" description="Helical" evidence="1">
    <location>
        <begin position="81"/>
        <end position="101"/>
    </location>
</feature>
<feature type="transmembrane region" description="Helical" evidence="1">
    <location>
        <begin position="114"/>
        <end position="134"/>
    </location>
</feature>
<feature type="transmembrane region" description="Helical" evidence="1">
    <location>
        <begin position="154"/>
        <end position="174"/>
    </location>
</feature>
<feature type="transmembrane region" description="Helical" evidence="1">
    <location>
        <begin position="186"/>
        <end position="206"/>
    </location>
</feature>
<feature type="transmembrane region" description="Helical" evidence="1">
    <location>
        <begin position="237"/>
        <end position="257"/>
    </location>
</feature>
<feature type="transmembrane region" description="Helical" evidence="1">
    <location>
        <begin position="265"/>
        <end position="285"/>
    </location>
</feature>
<feature type="transmembrane region" description="Helical" evidence="1">
    <location>
        <begin position="304"/>
        <end position="324"/>
    </location>
</feature>
<organism>
    <name type="scientific">Salmonella paratyphi B (strain ATCC BAA-1250 / SPB7)</name>
    <dbReference type="NCBI Taxonomy" id="1016998"/>
    <lineage>
        <taxon>Bacteria</taxon>
        <taxon>Pseudomonadati</taxon>
        <taxon>Pseudomonadota</taxon>
        <taxon>Gammaproteobacteria</taxon>
        <taxon>Enterobacterales</taxon>
        <taxon>Enterobacteriaceae</taxon>
        <taxon>Salmonella</taxon>
    </lineage>
</organism>
<protein>
    <recommendedName>
        <fullName evidence="1">NADH-quinone oxidoreductase subunit H</fullName>
        <ecNumber evidence="1">7.1.1.-</ecNumber>
    </recommendedName>
    <alternativeName>
        <fullName evidence="1">NADH dehydrogenase I subunit H</fullName>
    </alternativeName>
    <alternativeName>
        <fullName evidence="1">NDH-1 subunit H</fullName>
    </alternativeName>
</protein>
<evidence type="ECO:0000255" key="1">
    <source>
        <dbReference type="HAMAP-Rule" id="MF_01350"/>
    </source>
</evidence>
<comment type="function">
    <text evidence="1">NDH-1 shuttles electrons from NADH, via FMN and iron-sulfur (Fe-S) centers, to quinones in the respiratory chain. The immediate electron acceptor for the enzyme in this species is believed to be ubiquinone. Couples the redox reaction to proton translocation (for every two electrons transferred, four hydrogen ions are translocated across the cytoplasmic membrane), and thus conserves the redox energy in a proton gradient. This subunit may bind ubiquinone.</text>
</comment>
<comment type="catalytic activity">
    <reaction evidence="1">
        <text>a quinone + NADH + 5 H(+)(in) = a quinol + NAD(+) + 4 H(+)(out)</text>
        <dbReference type="Rhea" id="RHEA:57888"/>
        <dbReference type="ChEBI" id="CHEBI:15378"/>
        <dbReference type="ChEBI" id="CHEBI:24646"/>
        <dbReference type="ChEBI" id="CHEBI:57540"/>
        <dbReference type="ChEBI" id="CHEBI:57945"/>
        <dbReference type="ChEBI" id="CHEBI:132124"/>
    </reaction>
</comment>
<comment type="subunit">
    <text evidence="1">NDH-1 is composed of 13 different subunits. Subunits NuoA, H, J, K, L, M, N constitute the membrane sector of the complex.</text>
</comment>
<comment type="subcellular location">
    <subcellularLocation>
        <location evidence="1">Cell inner membrane</location>
        <topology evidence="1">Multi-pass membrane protein</topology>
    </subcellularLocation>
</comment>
<comment type="similarity">
    <text evidence="1">Belongs to the complex I subunit 1 family.</text>
</comment>
<gene>
    <name evidence="1" type="primary">nuoH</name>
    <name type="ordered locus">SPAB_00656</name>
</gene>
<name>NUOH_SALPB</name>
<proteinExistence type="inferred from homology"/>
<dbReference type="EC" id="7.1.1.-" evidence="1"/>
<dbReference type="EMBL" id="CP000886">
    <property type="protein sequence ID" value="ABX66082.1"/>
    <property type="molecule type" value="Genomic_DNA"/>
</dbReference>
<dbReference type="RefSeq" id="WP_000118515.1">
    <property type="nucleotide sequence ID" value="NC_010102.1"/>
</dbReference>
<dbReference type="SMR" id="A9N586"/>
<dbReference type="GeneID" id="66756771"/>
<dbReference type="KEGG" id="spq:SPAB_00656"/>
<dbReference type="PATRIC" id="fig|1016998.12.peg.616"/>
<dbReference type="HOGENOM" id="CLU_015134_0_1_6"/>
<dbReference type="BioCyc" id="SENT1016998:SPAB_RS02725-MONOMER"/>
<dbReference type="Proteomes" id="UP000008556">
    <property type="component" value="Chromosome"/>
</dbReference>
<dbReference type="GO" id="GO:0005886">
    <property type="term" value="C:plasma membrane"/>
    <property type="evidence" value="ECO:0007669"/>
    <property type="project" value="UniProtKB-SubCell"/>
</dbReference>
<dbReference type="GO" id="GO:0003954">
    <property type="term" value="F:NADH dehydrogenase activity"/>
    <property type="evidence" value="ECO:0007669"/>
    <property type="project" value="TreeGrafter"/>
</dbReference>
<dbReference type="GO" id="GO:0016655">
    <property type="term" value="F:oxidoreductase activity, acting on NAD(P)H, quinone or similar compound as acceptor"/>
    <property type="evidence" value="ECO:0007669"/>
    <property type="project" value="UniProtKB-UniRule"/>
</dbReference>
<dbReference type="GO" id="GO:0048038">
    <property type="term" value="F:quinone binding"/>
    <property type="evidence" value="ECO:0007669"/>
    <property type="project" value="UniProtKB-KW"/>
</dbReference>
<dbReference type="GO" id="GO:0009060">
    <property type="term" value="P:aerobic respiration"/>
    <property type="evidence" value="ECO:0007669"/>
    <property type="project" value="TreeGrafter"/>
</dbReference>
<dbReference type="HAMAP" id="MF_01350">
    <property type="entry name" value="NDH1_NuoH"/>
    <property type="match status" value="1"/>
</dbReference>
<dbReference type="InterPro" id="IPR001694">
    <property type="entry name" value="NADH_UbQ_OxRdtase_su1/FPO"/>
</dbReference>
<dbReference type="InterPro" id="IPR018086">
    <property type="entry name" value="NADH_UbQ_OxRdtase_su1_CS"/>
</dbReference>
<dbReference type="NCBIfam" id="NF004740">
    <property type="entry name" value="PRK06076.1-1"/>
    <property type="match status" value="1"/>
</dbReference>
<dbReference type="NCBIfam" id="NF004741">
    <property type="entry name" value="PRK06076.1-2"/>
    <property type="match status" value="1"/>
</dbReference>
<dbReference type="PANTHER" id="PTHR11432">
    <property type="entry name" value="NADH DEHYDROGENASE SUBUNIT 1"/>
    <property type="match status" value="1"/>
</dbReference>
<dbReference type="PANTHER" id="PTHR11432:SF3">
    <property type="entry name" value="NADH-UBIQUINONE OXIDOREDUCTASE CHAIN 1"/>
    <property type="match status" value="1"/>
</dbReference>
<dbReference type="Pfam" id="PF00146">
    <property type="entry name" value="NADHdh"/>
    <property type="match status" value="1"/>
</dbReference>
<dbReference type="PROSITE" id="PS00667">
    <property type="entry name" value="COMPLEX1_ND1_1"/>
    <property type="match status" value="1"/>
</dbReference>
<dbReference type="PROSITE" id="PS00668">
    <property type="entry name" value="COMPLEX1_ND1_2"/>
    <property type="match status" value="1"/>
</dbReference>
<reference key="1">
    <citation type="submission" date="2007-11" db="EMBL/GenBank/DDBJ databases">
        <authorList>
            <consortium name="The Salmonella enterica serovar Paratyphi B Genome Sequencing Project"/>
            <person name="McClelland M."/>
            <person name="Sanderson E.K."/>
            <person name="Porwollik S."/>
            <person name="Spieth J."/>
            <person name="Clifton W.S."/>
            <person name="Fulton R."/>
            <person name="Cordes M."/>
            <person name="Wollam A."/>
            <person name="Shah N."/>
            <person name="Pepin K."/>
            <person name="Bhonagiri V."/>
            <person name="Nash W."/>
            <person name="Johnson M."/>
            <person name="Thiruvilangam P."/>
            <person name="Wilson R."/>
        </authorList>
    </citation>
    <scope>NUCLEOTIDE SEQUENCE [LARGE SCALE GENOMIC DNA]</scope>
    <source>
        <strain>ATCC BAA-1250 / SPB7</strain>
    </source>
</reference>
<sequence length="325" mass="36292">MSWITPDLIEILLSILKAVVILLVVVTCGAFMSFGERRLLGLFQNRYGPNRVGWGGSLQLVADMIKMFFKEDWIPKFSDRVIFTLAPMIAFTSLLLSFAIVPVSPNWVVADLNIGILFFLMMAGLAVYAVLFAGWSSNNKYSLLGAMRASAQTVSYEVFLGLSLMGVVAQAGSFNMTDIVNNQAHLWNVIPQFFGFVTFAIAGVAVCHRHPFDQPEAEQELADGYHIEYSGMKFGLFFVGEYIGIVTVSALMVTLFFGGWHGPFLPPFVWFALKTAFFMMMFILIRASLPRPRYDQVMSFGWKVCLPLTLINLLVTAAVILWQAQ</sequence>